<sequence length="328" mass="36418">MDAYERITRNAAEVVTEEEIEAMADDPDGKRAYVGYEPSGVLHIGHMLTANKLIDLQEAGFEVTVLLADVHAYLNDKGSFEEIRHTAERMRDQFIAYGLDESNTQFVLGSDFQLDDDYTLDLHSLELETTLARAERAMAEITSGDSVKVSQAVYPLMQALDIPYLGVDLAVGGMEQRKVHMLARDVLPSIDREPPTSLHTPLIADLGTGRGKMSSSEGVTISMEDSREDIESKVNDAYCPRTADPEPTDDGQSRENPVLQVFEYHVFPRFDTVVVERPEEYGGDLEYDSYDALEAELESGELHPADAKGALAEYLNRLIAPGREQLAE</sequence>
<protein>
    <recommendedName>
        <fullName evidence="1">Tyrosine--tRNA ligase</fullName>
        <ecNumber evidence="1">6.1.1.1</ecNumber>
    </recommendedName>
    <alternativeName>
        <fullName evidence="1">Tyrosyl-tRNA synthetase</fullName>
        <shortName evidence="1">TyrRS</shortName>
    </alternativeName>
</protein>
<proteinExistence type="inferred from homology"/>
<gene>
    <name evidence="1" type="primary">tyrS</name>
    <name type="ordered locus">Hlac_2505</name>
</gene>
<reference key="1">
    <citation type="journal article" date="2016" name="Stand. Genomic Sci.">
        <title>Complete genome sequence of the Antarctic Halorubrum lacusprofundi type strain ACAM 34.</title>
        <authorList>
            <person name="Anderson I.J."/>
            <person name="DasSarma P."/>
            <person name="Lucas S."/>
            <person name="Copeland A."/>
            <person name="Lapidus A."/>
            <person name="Del Rio T.G."/>
            <person name="Tice H."/>
            <person name="Dalin E."/>
            <person name="Bruce D.C."/>
            <person name="Goodwin L."/>
            <person name="Pitluck S."/>
            <person name="Sims D."/>
            <person name="Brettin T.S."/>
            <person name="Detter J.C."/>
            <person name="Han C.S."/>
            <person name="Larimer F."/>
            <person name="Hauser L."/>
            <person name="Land M."/>
            <person name="Ivanova N."/>
            <person name="Richardson P."/>
            <person name="Cavicchioli R."/>
            <person name="DasSarma S."/>
            <person name="Woese C.R."/>
            <person name="Kyrpides N.C."/>
        </authorList>
    </citation>
    <scope>NUCLEOTIDE SEQUENCE [LARGE SCALE GENOMIC DNA]</scope>
    <source>
        <strain>ATCC 49239 / DSM 5036 / JCM 8891 / ACAM 34</strain>
    </source>
</reference>
<feature type="chain" id="PRO_1000189474" description="Tyrosine--tRNA ligase">
    <location>
        <begin position="1"/>
        <end position="328"/>
    </location>
</feature>
<feature type="region of interest" description="Disordered" evidence="2">
    <location>
        <begin position="193"/>
        <end position="227"/>
    </location>
</feature>
<feature type="short sequence motif" description="'HIGH' region">
    <location>
        <begin position="38"/>
        <end position="46"/>
    </location>
</feature>
<feature type="short sequence motif" description="'KMSKS' region">
    <location>
        <begin position="212"/>
        <end position="216"/>
    </location>
</feature>
<feature type="binding site" evidence="1">
    <location>
        <position position="33"/>
    </location>
    <ligand>
        <name>L-tyrosine</name>
        <dbReference type="ChEBI" id="CHEBI:58315"/>
    </ligand>
</feature>
<feature type="binding site" evidence="1">
    <location>
        <position position="154"/>
    </location>
    <ligand>
        <name>L-tyrosine</name>
        <dbReference type="ChEBI" id="CHEBI:58315"/>
    </ligand>
</feature>
<feature type="binding site" evidence="1">
    <location>
        <position position="158"/>
    </location>
    <ligand>
        <name>L-tyrosine</name>
        <dbReference type="ChEBI" id="CHEBI:58315"/>
    </ligand>
</feature>
<feature type="binding site" evidence="1">
    <location>
        <position position="161"/>
    </location>
    <ligand>
        <name>L-tyrosine</name>
        <dbReference type="ChEBI" id="CHEBI:58315"/>
    </ligand>
</feature>
<feature type="binding site" evidence="1">
    <location>
        <position position="176"/>
    </location>
    <ligand>
        <name>L-tyrosine</name>
        <dbReference type="ChEBI" id="CHEBI:58315"/>
    </ligand>
</feature>
<feature type="binding site" evidence="1">
    <location>
        <position position="215"/>
    </location>
    <ligand>
        <name>ATP</name>
        <dbReference type="ChEBI" id="CHEBI:30616"/>
    </ligand>
</feature>
<name>SYY_HALLT</name>
<dbReference type="EC" id="6.1.1.1" evidence="1"/>
<dbReference type="EMBL" id="CP001365">
    <property type="protein sequence ID" value="ACM58078.1"/>
    <property type="molecule type" value="Genomic_DNA"/>
</dbReference>
<dbReference type="RefSeq" id="WP_015911190.1">
    <property type="nucleotide sequence ID" value="NC_012029.1"/>
</dbReference>
<dbReference type="SMR" id="B9LTA6"/>
<dbReference type="GeneID" id="7401557"/>
<dbReference type="KEGG" id="hla:Hlac_2505"/>
<dbReference type="eggNOG" id="arCOG01886">
    <property type="taxonomic scope" value="Archaea"/>
</dbReference>
<dbReference type="HOGENOM" id="CLU_035267_0_1_2"/>
<dbReference type="Proteomes" id="UP000000740">
    <property type="component" value="Chromosome 1"/>
</dbReference>
<dbReference type="GO" id="GO:0005737">
    <property type="term" value="C:cytoplasm"/>
    <property type="evidence" value="ECO:0007669"/>
    <property type="project" value="UniProtKB-SubCell"/>
</dbReference>
<dbReference type="GO" id="GO:0005524">
    <property type="term" value="F:ATP binding"/>
    <property type="evidence" value="ECO:0007669"/>
    <property type="project" value="UniProtKB-UniRule"/>
</dbReference>
<dbReference type="GO" id="GO:0004831">
    <property type="term" value="F:tyrosine-tRNA ligase activity"/>
    <property type="evidence" value="ECO:0007669"/>
    <property type="project" value="UniProtKB-UniRule"/>
</dbReference>
<dbReference type="GO" id="GO:0006437">
    <property type="term" value="P:tyrosyl-tRNA aminoacylation"/>
    <property type="evidence" value="ECO:0007669"/>
    <property type="project" value="UniProtKB-UniRule"/>
</dbReference>
<dbReference type="Gene3D" id="3.40.50.620">
    <property type="entry name" value="HUPs"/>
    <property type="match status" value="1"/>
</dbReference>
<dbReference type="Gene3D" id="1.10.240.10">
    <property type="entry name" value="Tyrosyl-Transfer RNA Synthetase"/>
    <property type="match status" value="1"/>
</dbReference>
<dbReference type="HAMAP" id="MF_02008">
    <property type="entry name" value="Tyr_tRNA_synth_type3"/>
    <property type="match status" value="1"/>
</dbReference>
<dbReference type="InterPro" id="IPR001412">
    <property type="entry name" value="aa-tRNA-synth_I_CS"/>
</dbReference>
<dbReference type="InterPro" id="IPR002305">
    <property type="entry name" value="aa-tRNA-synth_Ic"/>
</dbReference>
<dbReference type="InterPro" id="IPR014729">
    <property type="entry name" value="Rossmann-like_a/b/a_fold"/>
</dbReference>
<dbReference type="InterPro" id="IPR002307">
    <property type="entry name" value="Tyr-tRNA-ligase"/>
</dbReference>
<dbReference type="InterPro" id="IPR023684">
    <property type="entry name" value="Tyr-tRNA-ligase_3"/>
</dbReference>
<dbReference type="InterPro" id="IPR023617">
    <property type="entry name" value="Tyr-tRNA-ligase_arc/euk-type"/>
</dbReference>
<dbReference type="InterPro" id="IPR050489">
    <property type="entry name" value="Tyr-tRNA_synthase"/>
</dbReference>
<dbReference type="NCBIfam" id="NF006330">
    <property type="entry name" value="PRK08560.1"/>
    <property type="match status" value="1"/>
</dbReference>
<dbReference type="NCBIfam" id="TIGR00234">
    <property type="entry name" value="tyrS"/>
    <property type="match status" value="1"/>
</dbReference>
<dbReference type="PANTHER" id="PTHR46264:SF4">
    <property type="entry name" value="TYROSINE--TRNA LIGASE, CYTOPLASMIC"/>
    <property type="match status" value="1"/>
</dbReference>
<dbReference type="PANTHER" id="PTHR46264">
    <property type="entry name" value="TYROSINE-TRNA LIGASE"/>
    <property type="match status" value="1"/>
</dbReference>
<dbReference type="Pfam" id="PF00579">
    <property type="entry name" value="tRNA-synt_1b"/>
    <property type="match status" value="1"/>
</dbReference>
<dbReference type="PIRSF" id="PIRSF006588">
    <property type="entry name" value="TyrRS_arch_euk"/>
    <property type="match status" value="1"/>
</dbReference>
<dbReference type="PRINTS" id="PR01040">
    <property type="entry name" value="TRNASYNTHTYR"/>
</dbReference>
<dbReference type="SUPFAM" id="SSF52374">
    <property type="entry name" value="Nucleotidylyl transferase"/>
    <property type="match status" value="1"/>
</dbReference>
<dbReference type="PROSITE" id="PS00178">
    <property type="entry name" value="AA_TRNA_LIGASE_I"/>
    <property type="match status" value="1"/>
</dbReference>
<evidence type="ECO:0000255" key="1">
    <source>
        <dbReference type="HAMAP-Rule" id="MF_02008"/>
    </source>
</evidence>
<evidence type="ECO:0000256" key="2">
    <source>
        <dbReference type="SAM" id="MobiDB-lite"/>
    </source>
</evidence>
<comment type="function">
    <text evidence="1">Catalyzes the attachment of tyrosine to tRNA(Tyr) in a two-step reaction: tyrosine is first activated by ATP to form Tyr-AMP and then transferred to the acceptor end of tRNA(Tyr).</text>
</comment>
<comment type="catalytic activity">
    <reaction evidence="1">
        <text>tRNA(Tyr) + L-tyrosine + ATP = L-tyrosyl-tRNA(Tyr) + AMP + diphosphate + H(+)</text>
        <dbReference type="Rhea" id="RHEA:10220"/>
        <dbReference type="Rhea" id="RHEA-COMP:9706"/>
        <dbReference type="Rhea" id="RHEA-COMP:9707"/>
        <dbReference type="ChEBI" id="CHEBI:15378"/>
        <dbReference type="ChEBI" id="CHEBI:30616"/>
        <dbReference type="ChEBI" id="CHEBI:33019"/>
        <dbReference type="ChEBI" id="CHEBI:58315"/>
        <dbReference type="ChEBI" id="CHEBI:78442"/>
        <dbReference type="ChEBI" id="CHEBI:78536"/>
        <dbReference type="ChEBI" id="CHEBI:456215"/>
        <dbReference type="EC" id="6.1.1.1"/>
    </reaction>
</comment>
<comment type="subunit">
    <text evidence="1">Homodimer.</text>
</comment>
<comment type="subcellular location">
    <subcellularLocation>
        <location evidence="1">Cytoplasm</location>
    </subcellularLocation>
</comment>
<comment type="similarity">
    <text evidence="1">Belongs to the class-I aminoacyl-tRNA synthetase family. TyrS type 3 subfamily.</text>
</comment>
<accession>B9LTA6</accession>
<keyword id="KW-0030">Aminoacyl-tRNA synthetase</keyword>
<keyword id="KW-0067">ATP-binding</keyword>
<keyword id="KW-0963">Cytoplasm</keyword>
<keyword id="KW-0436">Ligase</keyword>
<keyword id="KW-0547">Nucleotide-binding</keyword>
<keyword id="KW-0648">Protein biosynthesis</keyword>
<keyword id="KW-1185">Reference proteome</keyword>
<organism>
    <name type="scientific">Halorubrum lacusprofundi (strain ATCC 49239 / DSM 5036 / JCM 8891 / ACAM 34)</name>
    <dbReference type="NCBI Taxonomy" id="416348"/>
    <lineage>
        <taxon>Archaea</taxon>
        <taxon>Methanobacteriati</taxon>
        <taxon>Methanobacteriota</taxon>
        <taxon>Stenosarchaea group</taxon>
        <taxon>Halobacteria</taxon>
        <taxon>Halobacteriales</taxon>
        <taxon>Haloferacaceae</taxon>
        <taxon>Halorubrum</taxon>
    </lineage>
</organism>